<comment type="function">
    <text evidence="3">Aminoacyl transferase; part of the gene cluster that mediates the biosynthesis of sphingofungins, bioactive molecules acting as sphingolipid inhibitors via inhibiting serine palmitoyl transferase (SPT) (PubMed:35023724). Within the pathway, sphA transfers aminomalonate onto the sphB product 3-hydroxyoctadeca-4,10-dienoyl-ACP to produce 3-keto-presphingofungin. The substrate specificity of sphA using only aminomalonate in Aspergillus fumigatus is responsible for the biosynthesis of sphingofungins B and C but not E and F like in Byssochlamys spectabilis. The PKS sphB does not contain any putative thioesterase domain for releasing the nascent polyketide chain and it has been suggested that aminoacyl transferases can facilitate the polyketide chain release (PubMed:35023724). Sphingofungin biosynthesis starts with the PKS sphB that produces an C18 polyketide precursor 3-hydroxyoctadeca-4,10-dienoyl-ACP containing one delta-6 desaturation and one delta-12 desaturation. The aminoacyl transferase sphA uses the sphB product to produce 3-keto-presphingofungin by adding an aminomalonate molecule. SphF then reduces the C-3 ketone of 3-keto-presphingofungin which leads to presphingofungin. The cytochrome P450 monooxygenase sphH converts presphingofungin into sphingofungin B1 which is further converted to sphingofungin B by the dioxygenase sphC. SphC is also able to convert presphingofungin into sphingofungin B2. The acetyltransferase sphE acetylates sphingofungin B to produce sphingofungin C, but can also convert sphingofungin B1 into sphingofungin C1 and sphingofungin B2 into sphingofungin C2. Finally, sphingofungin C can be spontaneously converted into sphingofungin D (PubMed:35023724).</text>
</comment>
<comment type="catalytic activity">
    <reaction evidence="3">
        <text>aminomalonate + (3R)-hydroxyoctadeca-4,10-dienoyl-[ACP] = 3-oxopresphingofungin + holo-[ACP] + CO2</text>
        <dbReference type="Rhea" id="RHEA:81151"/>
        <dbReference type="Rhea" id="RHEA-COMP:9685"/>
        <dbReference type="Rhea" id="RHEA-COMP:19635"/>
        <dbReference type="ChEBI" id="CHEBI:16526"/>
        <dbReference type="ChEBI" id="CHEBI:58158"/>
        <dbReference type="ChEBI" id="CHEBI:64479"/>
        <dbReference type="ChEBI" id="CHEBI:231803"/>
        <dbReference type="ChEBI" id="CHEBI:231804"/>
    </reaction>
    <physiologicalReaction direction="left-to-right" evidence="3">
        <dbReference type="Rhea" id="RHEA:81152"/>
    </physiologicalReaction>
</comment>
<comment type="cofactor">
    <cofactor evidence="1">
        <name>pyridoxal 5'-phosphate</name>
        <dbReference type="ChEBI" id="CHEBI:597326"/>
    </cofactor>
</comment>
<comment type="pathway">
    <text evidence="3">Secondary metabolite biosynthesis.</text>
</comment>
<comment type="subunit">
    <text evidence="1">Homodimer.</text>
</comment>
<comment type="induction">
    <text evidence="3">Expression is positively regulated by the sphingofungins biosynthesis cluster-specific transcription factor sphG.</text>
</comment>
<comment type="disruption phenotype">
    <text evidence="3">Completely abolishes the production of sphingofungins.</text>
</comment>
<comment type="biotechnology">
    <text evidence="2">The sphingofungins A, B, C, and D, show a limited antifungal spectrum of activity but are especially effective against Cryptococcus species, fungal pathogens causing opportunistic infections in human.</text>
</comment>
<comment type="similarity">
    <text evidence="5">Belongs to the class-II pyridoxal-phosphate-dependent aminotransferase family. BioF subfamily.</text>
</comment>
<accession>B0XZV7</accession>
<name>SPHA_ASPFC</name>
<sequence length="470" mass="51526">MAANGKVVSEMIAWIKSQKLIAPRMKDAPTFYRNLEEALDVRRSTQSLMTRGQSTWKTGDAIDFCSNDLLSLGLTGELRREFLAELARHPDFSLHSGGSRVMGGNYDYIEAVEQEIADFLGAETALMFNSGSNGNIAIYTAIPRPGDAIVYDELVHFSTHTGMAASLATTKVAFRHNDLDAFREAMSSTMDSHPMLQDGSRSILVSVESVYSMDGDVCPLVEMLEIAREICPKGNFAFIADEAHATGVVGPRGVGLVKLLGLENEVAIRLNTCGKALACTGSVVLGNATVRNMLLNYAGSLVNTTAPSFPSVAVIRAAYNLMRTGATQKAQDNIQHLVKYFFESITSSNIWDKATDLGILSIPVAEDYESLDFVTHIVPIWTRQKYNWWLFFHLQLAKIAVVPIDYPQVPKGKSRVRVMIHAGNTEEQVDYLVATLCDFANEMIDIEEGGEKGKIPKAAQEIYALMAAHA</sequence>
<organism>
    <name type="scientific">Aspergillus fumigatus (strain CBS 144.89 / FGSC A1163 / CEA10)</name>
    <name type="common">Neosartorya fumigata</name>
    <dbReference type="NCBI Taxonomy" id="451804"/>
    <lineage>
        <taxon>Eukaryota</taxon>
        <taxon>Fungi</taxon>
        <taxon>Dikarya</taxon>
        <taxon>Ascomycota</taxon>
        <taxon>Pezizomycotina</taxon>
        <taxon>Eurotiomycetes</taxon>
        <taxon>Eurotiomycetidae</taxon>
        <taxon>Eurotiales</taxon>
        <taxon>Aspergillaceae</taxon>
        <taxon>Aspergillus</taxon>
        <taxon>Aspergillus subgen. Fumigati</taxon>
    </lineage>
</organism>
<protein>
    <recommendedName>
        <fullName evidence="4">Aminoacyl transferase sphA</fullName>
        <ecNumber evidence="3">2.3.1.-</ecNumber>
    </recommendedName>
    <alternativeName>
        <fullName evidence="4">Sphingofungin biosynthesis cluster protein A</fullName>
    </alternativeName>
</protein>
<reference key="1">
    <citation type="journal article" date="2008" name="PLoS Genet.">
        <title>Genomic islands in the pathogenic filamentous fungus Aspergillus fumigatus.</title>
        <authorList>
            <person name="Fedorova N.D."/>
            <person name="Khaldi N."/>
            <person name="Joardar V.S."/>
            <person name="Maiti R."/>
            <person name="Amedeo P."/>
            <person name="Anderson M.J."/>
            <person name="Crabtree J."/>
            <person name="Silva J.C."/>
            <person name="Badger J.H."/>
            <person name="Albarraq A."/>
            <person name="Angiuoli S."/>
            <person name="Bussey H."/>
            <person name="Bowyer P."/>
            <person name="Cotty P.J."/>
            <person name="Dyer P.S."/>
            <person name="Egan A."/>
            <person name="Galens K."/>
            <person name="Fraser-Liggett C.M."/>
            <person name="Haas B.J."/>
            <person name="Inman J.M."/>
            <person name="Kent R."/>
            <person name="Lemieux S."/>
            <person name="Malavazi I."/>
            <person name="Orvis J."/>
            <person name="Roemer T."/>
            <person name="Ronning C.M."/>
            <person name="Sundaram J.P."/>
            <person name="Sutton G."/>
            <person name="Turner G."/>
            <person name="Venter J.C."/>
            <person name="White O.R."/>
            <person name="Whitty B.R."/>
            <person name="Youngman P."/>
            <person name="Wolfe K.H."/>
            <person name="Goldman G.H."/>
            <person name="Wortman J.R."/>
            <person name="Jiang B."/>
            <person name="Denning D.W."/>
            <person name="Nierman W.C."/>
        </authorList>
    </citation>
    <scope>NUCLEOTIDE SEQUENCE [LARGE SCALE GENOMIC DNA]</scope>
    <source>
        <strain>CBS 144.89 / FGSC A1163 / CEA10</strain>
    </source>
</reference>
<reference key="2">
    <citation type="journal article" date="1992" name="J. Antibiot.">
        <title>Sphingofungins A, B, C, and D; a new family of antifungal agents. I. Fermentation, isolation, and biological activity.</title>
        <authorList>
            <person name="VanMiddlesworth F."/>
            <person name="Giacobbe R.A."/>
            <person name="Lopez M."/>
            <person name="Garrity G."/>
            <person name="Bland J.A."/>
            <person name="Bartizal K."/>
            <person name="Fromtling R.A."/>
            <person name="Polishook J."/>
            <person name="Zweerink M."/>
            <person name="Edison A.M."/>
        </authorList>
    </citation>
    <scope>BIOTECHNOLOGY</scope>
</reference>
<reference key="3">
    <citation type="journal article" date="2022" name="ACS Chem. Biol.">
        <title>Biosynthesis of the sphingolipid inhibitors sphingofungins in filamentous fungi requires aminomalonate as a metabolic precursor.</title>
        <authorList>
            <person name="Bissell A.U."/>
            <person name="Rautschek J."/>
            <person name="Hoefgen S."/>
            <person name="Raguz L."/>
            <person name="Mattern D.J."/>
            <person name="Saeed N."/>
            <person name="Janevska S."/>
            <person name="Jojic K."/>
            <person name="Huang Y."/>
            <person name="Kufs J.E."/>
            <person name="Herboeck B."/>
            <person name="Guo H."/>
            <person name="Hillmann F."/>
            <person name="Beemelmanns C."/>
            <person name="Valiante V."/>
        </authorList>
    </citation>
    <scope>FUNCTION</scope>
    <scope>DISRUPTION PHENOTYPE</scope>
    <scope>INDUCTION</scope>
    <scope>CATALYTIC ACTIVITY</scope>
    <scope>PATHWAY</scope>
</reference>
<keyword id="KW-0032">Aminotransferase</keyword>
<keyword id="KW-0663">Pyridoxal phosphate</keyword>
<keyword id="KW-0808">Transferase</keyword>
<gene>
    <name evidence="4" type="primary">sphA</name>
    <name type="ORF">AFUB_034530</name>
</gene>
<evidence type="ECO:0000250" key="1">
    <source>
        <dbReference type="UniProtKB" id="B7LC58"/>
    </source>
</evidence>
<evidence type="ECO:0000269" key="2">
    <source>
    </source>
</evidence>
<evidence type="ECO:0000269" key="3">
    <source>
    </source>
</evidence>
<evidence type="ECO:0000303" key="4">
    <source>
    </source>
</evidence>
<evidence type="ECO:0000305" key="5"/>
<dbReference type="EC" id="2.3.1.-" evidence="3"/>
<dbReference type="EMBL" id="DS499596">
    <property type="protein sequence ID" value="EDP52289.1"/>
    <property type="molecule type" value="Genomic_DNA"/>
</dbReference>
<dbReference type="SMR" id="B0XZV7"/>
<dbReference type="EnsemblFungi" id="EDP52289">
    <property type="protein sequence ID" value="EDP52289"/>
    <property type="gene ID" value="AFUB_034530"/>
</dbReference>
<dbReference type="VEuPathDB" id="FungiDB:AFUB_034530"/>
<dbReference type="HOGENOM" id="CLU_015846_3_0_1"/>
<dbReference type="OrthoDB" id="76428at5052"/>
<dbReference type="PhylomeDB" id="B0XZV7"/>
<dbReference type="Proteomes" id="UP000001699">
    <property type="component" value="Unassembled WGS sequence"/>
</dbReference>
<dbReference type="GO" id="GO:0030170">
    <property type="term" value="F:pyridoxal phosphate binding"/>
    <property type="evidence" value="ECO:0007669"/>
    <property type="project" value="InterPro"/>
</dbReference>
<dbReference type="GO" id="GO:0008483">
    <property type="term" value="F:transaminase activity"/>
    <property type="evidence" value="ECO:0007669"/>
    <property type="project" value="UniProtKB-KW"/>
</dbReference>
<dbReference type="GO" id="GO:0009102">
    <property type="term" value="P:biotin biosynthetic process"/>
    <property type="evidence" value="ECO:0007669"/>
    <property type="project" value="TreeGrafter"/>
</dbReference>
<dbReference type="Gene3D" id="3.90.1150.10">
    <property type="entry name" value="Aspartate Aminotransferase, domain 1"/>
    <property type="match status" value="1"/>
</dbReference>
<dbReference type="Gene3D" id="3.40.640.10">
    <property type="entry name" value="Type I PLP-dependent aspartate aminotransferase-like (Major domain)"/>
    <property type="match status" value="1"/>
</dbReference>
<dbReference type="InterPro" id="IPR004839">
    <property type="entry name" value="Aminotransferase_I/II_large"/>
</dbReference>
<dbReference type="InterPro" id="IPR050087">
    <property type="entry name" value="AON_synthase_class-II"/>
</dbReference>
<dbReference type="InterPro" id="IPR015424">
    <property type="entry name" value="PyrdxlP-dep_Trfase"/>
</dbReference>
<dbReference type="InterPro" id="IPR015421">
    <property type="entry name" value="PyrdxlP-dep_Trfase_major"/>
</dbReference>
<dbReference type="InterPro" id="IPR015422">
    <property type="entry name" value="PyrdxlP-dep_Trfase_small"/>
</dbReference>
<dbReference type="PANTHER" id="PTHR13693:SF77">
    <property type="entry name" value="8-AMINO-7-OXONONANOATE SYNTHASE"/>
    <property type="match status" value="1"/>
</dbReference>
<dbReference type="PANTHER" id="PTHR13693">
    <property type="entry name" value="CLASS II AMINOTRANSFERASE/8-AMINO-7-OXONONANOATE SYNTHASE"/>
    <property type="match status" value="1"/>
</dbReference>
<dbReference type="Pfam" id="PF00155">
    <property type="entry name" value="Aminotran_1_2"/>
    <property type="match status" value="1"/>
</dbReference>
<dbReference type="SUPFAM" id="SSF53383">
    <property type="entry name" value="PLP-dependent transferases"/>
    <property type="match status" value="1"/>
</dbReference>
<feature type="chain" id="PRO_0000461276" description="Aminoacyl transferase sphA">
    <location>
        <begin position="1"/>
        <end position="470"/>
    </location>
</feature>
<feature type="binding site" evidence="1">
    <location>
        <position position="212"/>
    </location>
    <ligand>
        <name>pyridoxal 5'-phosphate</name>
        <dbReference type="ChEBI" id="CHEBI:597326"/>
    </ligand>
</feature>
<feature type="binding site" evidence="1">
    <location>
        <position position="244"/>
    </location>
    <ligand>
        <name>pyridoxal 5'-phosphate</name>
        <dbReference type="ChEBI" id="CHEBI:597326"/>
    </ligand>
</feature>
<feature type="binding site" evidence="1">
    <location>
        <position position="272"/>
    </location>
    <ligand>
        <name>pyridoxal 5'-phosphate</name>
        <dbReference type="ChEBI" id="CHEBI:597326"/>
    </ligand>
</feature>
<feature type="modified residue" description="N6-(pyridoxal phosphate)lysine" evidence="1">
    <location>
        <position position="275"/>
    </location>
</feature>
<proteinExistence type="evidence at protein level"/>